<accession>A7X7B0</accession>
<reference key="1">
    <citation type="journal article" date="2008" name="Antimicrob. Agents Chemother.">
        <title>Mutated response regulator graR is responsible for phenotypic conversion of Staphylococcus aureus from heterogeneous vancomycin-intermediate resistance to vancomycin-intermediate resistance.</title>
        <authorList>
            <person name="Neoh H.-M."/>
            <person name="Cui L."/>
            <person name="Yuzawa H."/>
            <person name="Takeuchi F."/>
            <person name="Matsuo M."/>
            <person name="Hiramatsu K."/>
        </authorList>
    </citation>
    <scope>NUCLEOTIDE SEQUENCE [LARGE SCALE GENOMIC DNA]</scope>
    <source>
        <strain>Mu3 / ATCC 700698</strain>
    </source>
</reference>
<keyword id="KW-0687">Ribonucleoprotein</keyword>
<keyword id="KW-0689">Ribosomal protein</keyword>
<evidence type="ECO:0000255" key="1">
    <source>
        <dbReference type="HAMAP-Rule" id="MF_00391"/>
    </source>
</evidence>
<evidence type="ECO:0000256" key="2">
    <source>
        <dbReference type="SAM" id="MobiDB-lite"/>
    </source>
</evidence>
<evidence type="ECO:0000305" key="3"/>
<feature type="chain" id="PRO_1000013455" description="Large ribosomal subunit protein bL34">
    <location>
        <begin position="1"/>
        <end position="45"/>
    </location>
</feature>
<feature type="region of interest" description="Disordered" evidence="2">
    <location>
        <begin position="1"/>
        <end position="45"/>
    </location>
</feature>
<comment type="similarity">
    <text evidence="1">Belongs to the bacterial ribosomal protein bL34 family.</text>
</comment>
<sequence length="45" mass="5434">MVKRTYQPNKRKHSKVHGFRKRMSTKNGRKVLARRRRKGRKVLSA</sequence>
<protein>
    <recommendedName>
        <fullName evidence="1">Large ribosomal subunit protein bL34</fullName>
    </recommendedName>
    <alternativeName>
        <fullName evidence="3">50S ribosomal protein L34</fullName>
    </alternativeName>
</protein>
<name>RL34_STAA1</name>
<proteinExistence type="inferred from homology"/>
<organism>
    <name type="scientific">Staphylococcus aureus (strain Mu3 / ATCC 700698)</name>
    <dbReference type="NCBI Taxonomy" id="418127"/>
    <lineage>
        <taxon>Bacteria</taxon>
        <taxon>Bacillati</taxon>
        <taxon>Bacillota</taxon>
        <taxon>Bacilli</taxon>
        <taxon>Bacillales</taxon>
        <taxon>Staphylococcaceae</taxon>
        <taxon>Staphylococcus</taxon>
    </lineage>
</organism>
<dbReference type="EMBL" id="AP009324">
    <property type="protein sequence ID" value="BAF79581.1"/>
    <property type="molecule type" value="Genomic_DNA"/>
</dbReference>
<dbReference type="RefSeq" id="WP_000240855.1">
    <property type="nucleotide sequence ID" value="NZ_CTYB01000035.1"/>
</dbReference>
<dbReference type="SMR" id="A7X7B0"/>
<dbReference type="GeneID" id="98347025"/>
<dbReference type="KEGG" id="saw:SAHV_2698"/>
<dbReference type="HOGENOM" id="CLU_129938_2_0_9"/>
<dbReference type="GO" id="GO:1990904">
    <property type="term" value="C:ribonucleoprotein complex"/>
    <property type="evidence" value="ECO:0007669"/>
    <property type="project" value="UniProtKB-KW"/>
</dbReference>
<dbReference type="GO" id="GO:0005840">
    <property type="term" value="C:ribosome"/>
    <property type="evidence" value="ECO:0007669"/>
    <property type="project" value="UniProtKB-KW"/>
</dbReference>
<dbReference type="GO" id="GO:0003735">
    <property type="term" value="F:structural constituent of ribosome"/>
    <property type="evidence" value="ECO:0007669"/>
    <property type="project" value="InterPro"/>
</dbReference>
<dbReference type="GO" id="GO:0006412">
    <property type="term" value="P:translation"/>
    <property type="evidence" value="ECO:0007669"/>
    <property type="project" value="UniProtKB-UniRule"/>
</dbReference>
<dbReference type="FunFam" id="1.10.287.3980:FF:000001">
    <property type="entry name" value="Mitochondrial ribosomal protein L34"/>
    <property type="match status" value="1"/>
</dbReference>
<dbReference type="Gene3D" id="1.10.287.3980">
    <property type="match status" value="1"/>
</dbReference>
<dbReference type="HAMAP" id="MF_00391">
    <property type="entry name" value="Ribosomal_bL34"/>
    <property type="match status" value="1"/>
</dbReference>
<dbReference type="InterPro" id="IPR000271">
    <property type="entry name" value="Ribosomal_bL34"/>
</dbReference>
<dbReference type="InterPro" id="IPR020939">
    <property type="entry name" value="Ribosomal_bL34_CS"/>
</dbReference>
<dbReference type="NCBIfam" id="TIGR01030">
    <property type="entry name" value="rpmH_bact"/>
    <property type="match status" value="1"/>
</dbReference>
<dbReference type="PANTHER" id="PTHR14503:SF4">
    <property type="entry name" value="LARGE RIBOSOMAL SUBUNIT PROTEIN BL34M"/>
    <property type="match status" value="1"/>
</dbReference>
<dbReference type="PANTHER" id="PTHR14503">
    <property type="entry name" value="MITOCHONDRIAL RIBOSOMAL PROTEIN 34 FAMILY MEMBER"/>
    <property type="match status" value="1"/>
</dbReference>
<dbReference type="Pfam" id="PF00468">
    <property type="entry name" value="Ribosomal_L34"/>
    <property type="match status" value="1"/>
</dbReference>
<dbReference type="PROSITE" id="PS00784">
    <property type="entry name" value="RIBOSOMAL_L34"/>
    <property type="match status" value="1"/>
</dbReference>
<gene>
    <name evidence="1" type="primary">rpmH</name>
    <name type="ordered locus">SAHV_2698</name>
</gene>